<accession>B3Q0A9</accession>
<reference key="1">
    <citation type="journal article" date="2010" name="Appl. Environ. Microbiol.">
        <title>Conserved symbiotic plasmid DNA sequences in the multireplicon pangenomic structure of Rhizobium etli.</title>
        <authorList>
            <person name="Gonzalez V."/>
            <person name="Acosta J.L."/>
            <person name="Santamaria R.I."/>
            <person name="Bustos P."/>
            <person name="Fernandez J.L."/>
            <person name="Hernandez Gonzalez I.L."/>
            <person name="Diaz R."/>
            <person name="Flores M."/>
            <person name="Palacios R."/>
            <person name="Mora J."/>
            <person name="Davila G."/>
        </authorList>
    </citation>
    <scope>NUCLEOTIDE SEQUENCE [LARGE SCALE GENOMIC DNA]</scope>
    <source>
        <strain>CIAT 652</strain>
    </source>
</reference>
<sequence>MNAIVEQLKSTAAATKATDLRAAFAADAQRFSRFSVALDDLLMDFSKTAVNDDILKLLVKLAEDGGVEKKREEMFSGKAINFTEDRAVLHTALRNRSNTPVLVDGKDVMPDVNAVLAAMGKFADEIRSGALKGATGKAITDVINIGIGGSDLGPVMATLALAPFHDGPRAHFVSNIDGAHIADILKLVQPETTLFIVASKTFTTVETMTNAQTARNFIAKALGEAAVQHHFAAVSTALDKVAAFGIDSARVFGFWDWVGGRYSIWSAIGLPLMIAIGPENFGKFLDGAHAVDNHFRKAPITENLPMLLGLIGFYHRNVLGYPTRAILPYDQRLSRFPAYLQQLDMESNGKGVTIDGTPVEGNSGPVVWGEPGTNGQHAFYQLIHQGTSIIPAEFMIAANAFEPELRHQHQLLISNVLAQSEALMKGRTFAEAKKQLTDKGMDDKKADFIAPHRVFTGNRPSITFVYDKLTPYALGRLIALYEHRVFVEGVLFRINSFDQWGVELGKELATGLLPVVEGKESAEGHDSSTQGLVAALAKLAK</sequence>
<keyword id="KW-0963">Cytoplasm</keyword>
<keyword id="KW-0312">Gluconeogenesis</keyword>
<keyword id="KW-0324">Glycolysis</keyword>
<keyword id="KW-0413">Isomerase</keyword>
<feature type="chain" id="PRO_1000125748" description="Glucose-6-phosphate isomerase">
    <location>
        <begin position="1"/>
        <end position="541"/>
    </location>
</feature>
<feature type="active site" description="Proton donor" evidence="1">
    <location>
        <position position="346"/>
    </location>
</feature>
<feature type="active site" evidence="1">
    <location>
        <position position="377"/>
    </location>
</feature>
<feature type="active site" evidence="1">
    <location>
        <position position="506"/>
    </location>
</feature>
<dbReference type="EC" id="5.3.1.9" evidence="1"/>
<dbReference type="EMBL" id="CP001074">
    <property type="protein sequence ID" value="ACE89541.1"/>
    <property type="molecule type" value="Genomic_DNA"/>
</dbReference>
<dbReference type="SMR" id="B3Q0A9"/>
<dbReference type="KEGG" id="rec:RHECIAT_CH0000548"/>
<dbReference type="eggNOG" id="COG0166">
    <property type="taxonomic scope" value="Bacteria"/>
</dbReference>
<dbReference type="HOGENOM" id="CLU_017947_3_1_5"/>
<dbReference type="UniPathway" id="UPA00109">
    <property type="reaction ID" value="UER00181"/>
</dbReference>
<dbReference type="UniPathway" id="UPA00138"/>
<dbReference type="Proteomes" id="UP000008817">
    <property type="component" value="Chromosome"/>
</dbReference>
<dbReference type="GO" id="GO:0005829">
    <property type="term" value="C:cytosol"/>
    <property type="evidence" value="ECO:0007669"/>
    <property type="project" value="TreeGrafter"/>
</dbReference>
<dbReference type="GO" id="GO:0097367">
    <property type="term" value="F:carbohydrate derivative binding"/>
    <property type="evidence" value="ECO:0007669"/>
    <property type="project" value="InterPro"/>
</dbReference>
<dbReference type="GO" id="GO:0004347">
    <property type="term" value="F:glucose-6-phosphate isomerase activity"/>
    <property type="evidence" value="ECO:0007669"/>
    <property type="project" value="UniProtKB-UniRule"/>
</dbReference>
<dbReference type="GO" id="GO:0048029">
    <property type="term" value="F:monosaccharide binding"/>
    <property type="evidence" value="ECO:0007669"/>
    <property type="project" value="TreeGrafter"/>
</dbReference>
<dbReference type="GO" id="GO:0006094">
    <property type="term" value="P:gluconeogenesis"/>
    <property type="evidence" value="ECO:0007669"/>
    <property type="project" value="UniProtKB-UniRule"/>
</dbReference>
<dbReference type="GO" id="GO:0051156">
    <property type="term" value="P:glucose 6-phosphate metabolic process"/>
    <property type="evidence" value="ECO:0007669"/>
    <property type="project" value="TreeGrafter"/>
</dbReference>
<dbReference type="GO" id="GO:0006096">
    <property type="term" value="P:glycolytic process"/>
    <property type="evidence" value="ECO:0007669"/>
    <property type="project" value="UniProtKB-UniRule"/>
</dbReference>
<dbReference type="CDD" id="cd05015">
    <property type="entry name" value="SIS_PGI_1"/>
    <property type="match status" value="1"/>
</dbReference>
<dbReference type="CDD" id="cd05016">
    <property type="entry name" value="SIS_PGI_2"/>
    <property type="match status" value="1"/>
</dbReference>
<dbReference type="FunFam" id="3.40.50.10490:FF:000004">
    <property type="entry name" value="Glucose-6-phosphate isomerase"/>
    <property type="match status" value="1"/>
</dbReference>
<dbReference type="Gene3D" id="1.10.1390.10">
    <property type="match status" value="1"/>
</dbReference>
<dbReference type="Gene3D" id="3.40.50.10490">
    <property type="entry name" value="Glucose-6-phosphate isomerase like protein, domain 1"/>
    <property type="match status" value="2"/>
</dbReference>
<dbReference type="HAMAP" id="MF_00473">
    <property type="entry name" value="G6P_isomerase"/>
    <property type="match status" value="1"/>
</dbReference>
<dbReference type="InterPro" id="IPR001672">
    <property type="entry name" value="G6P_Isomerase"/>
</dbReference>
<dbReference type="InterPro" id="IPR023096">
    <property type="entry name" value="G6P_Isomerase_C"/>
</dbReference>
<dbReference type="InterPro" id="IPR018189">
    <property type="entry name" value="Phosphoglucose_isomerase_CS"/>
</dbReference>
<dbReference type="InterPro" id="IPR046348">
    <property type="entry name" value="SIS_dom_sf"/>
</dbReference>
<dbReference type="InterPro" id="IPR035476">
    <property type="entry name" value="SIS_PGI_1"/>
</dbReference>
<dbReference type="InterPro" id="IPR035482">
    <property type="entry name" value="SIS_PGI_2"/>
</dbReference>
<dbReference type="NCBIfam" id="NF001211">
    <property type="entry name" value="PRK00179.1"/>
    <property type="match status" value="1"/>
</dbReference>
<dbReference type="PANTHER" id="PTHR11469">
    <property type="entry name" value="GLUCOSE-6-PHOSPHATE ISOMERASE"/>
    <property type="match status" value="1"/>
</dbReference>
<dbReference type="PANTHER" id="PTHR11469:SF1">
    <property type="entry name" value="GLUCOSE-6-PHOSPHATE ISOMERASE"/>
    <property type="match status" value="1"/>
</dbReference>
<dbReference type="Pfam" id="PF00342">
    <property type="entry name" value="PGI"/>
    <property type="match status" value="1"/>
</dbReference>
<dbReference type="PRINTS" id="PR00662">
    <property type="entry name" value="G6PISOMERASE"/>
</dbReference>
<dbReference type="SUPFAM" id="SSF53697">
    <property type="entry name" value="SIS domain"/>
    <property type="match status" value="1"/>
</dbReference>
<dbReference type="PROSITE" id="PS00765">
    <property type="entry name" value="P_GLUCOSE_ISOMERASE_1"/>
    <property type="match status" value="1"/>
</dbReference>
<dbReference type="PROSITE" id="PS00174">
    <property type="entry name" value="P_GLUCOSE_ISOMERASE_2"/>
    <property type="match status" value="1"/>
</dbReference>
<dbReference type="PROSITE" id="PS51463">
    <property type="entry name" value="P_GLUCOSE_ISOMERASE_3"/>
    <property type="match status" value="1"/>
</dbReference>
<gene>
    <name evidence="1" type="primary">pgi</name>
    <name type="ordered locus">RHECIAT_CH0000548</name>
</gene>
<protein>
    <recommendedName>
        <fullName evidence="1">Glucose-6-phosphate isomerase</fullName>
        <shortName evidence="1">GPI</shortName>
        <ecNumber evidence="1">5.3.1.9</ecNumber>
    </recommendedName>
    <alternativeName>
        <fullName evidence="1">Phosphoglucose isomerase</fullName>
        <shortName evidence="1">PGI</shortName>
    </alternativeName>
    <alternativeName>
        <fullName evidence="1">Phosphohexose isomerase</fullName>
        <shortName evidence="1">PHI</shortName>
    </alternativeName>
</protein>
<organism>
    <name type="scientific">Rhizobium etli (strain CIAT 652)</name>
    <dbReference type="NCBI Taxonomy" id="491916"/>
    <lineage>
        <taxon>Bacteria</taxon>
        <taxon>Pseudomonadati</taxon>
        <taxon>Pseudomonadota</taxon>
        <taxon>Alphaproteobacteria</taxon>
        <taxon>Hyphomicrobiales</taxon>
        <taxon>Rhizobiaceae</taxon>
        <taxon>Rhizobium/Agrobacterium group</taxon>
        <taxon>Rhizobium</taxon>
    </lineage>
</organism>
<evidence type="ECO:0000255" key="1">
    <source>
        <dbReference type="HAMAP-Rule" id="MF_00473"/>
    </source>
</evidence>
<name>G6PI_RHIE6</name>
<proteinExistence type="inferred from homology"/>
<comment type="function">
    <text evidence="1">Catalyzes the reversible isomerization of glucose-6-phosphate to fructose-6-phosphate.</text>
</comment>
<comment type="catalytic activity">
    <reaction evidence="1">
        <text>alpha-D-glucose 6-phosphate = beta-D-fructose 6-phosphate</text>
        <dbReference type="Rhea" id="RHEA:11816"/>
        <dbReference type="ChEBI" id="CHEBI:57634"/>
        <dbReference type="ChEBI" id="CHEBI:58225"/>
        <dbReference type="EC" id="5.3.1.9"/>
    </reaction>
</comment>
<comment type="pathway">
    <text evidence="1">Carbohydrate biosynthesis; gluconeogenesis.</text>
</comment>
<comment type="pathway">
    <text evidence="1">Carbohydrate degradation; glycolysis; D-glyceraldehyde 3-phosphate and glycerone phosphate from D-glucose: step 2/4.</text>
</comment>
<comment type="subcellular location">
    <subcellularLocation>
        <location evidence="1">Cytoplasm</location>
    </subcellularLocation>
</comment>
<comment type="similarity">
    <text evidence="1">Belongs to the GPI family.</text>
</comment>